<reference key="1">
    <citation type="submission" date="2008-03" db="EMBL/GenBank/DDBJ databases">
        <title>Complete sequence of Leptothrix cholodnii SP-6.</title>
        <authorList>
            <consortium name="US DOE Joint Genome Institute"/>
            <person name="Copeland A."/>
            <person name="Lucas S."/>
            <person name="Lapidus A."/>
            <person name="Glavina del Rio T."/>
            <person name="Dalin E."/>
            <person name="Tice H."/>
            <person name="Bruce D."/>
            <person name="Goodwin L."/>
            <person name="Pitluck S."/>
            <person name="Chertkov O."/>
            <person name="Brettin T."/>
            <person name="Detter J.C."/>
            <person name="Han C."/>
            <person name="Kuske C.R."/>
            <person name="Schmutz J."/>
            <person name="Larimer F."/>
            <person name="Land M."/>
            <person name="Hauser L."/>
            <person name="Kyrpides N."/>
            <person name="Lykidis A."/>
            <person name="Emerson D."/>
            <person name="Richardson P."/>
        </authorList>
    </citation>
    <scope>NUCLEOTIDE SEQUENCE [LARGE SCALE GENOMIC DNA]</scope>
    <source>
        <strain>ATCC 51168 / LMG 8142 / SP-6</strain>
    </source>
</reference>
<comment type="function">
    <text evidence="1">Catalyzes the synthesis of the hydroxymethylpyrimidine phosphate (HMP-P) moiety of thiamine from aminoimidazole ribotide (AIR) in a radical S-adenosyl-L-methionine (SAM)-dependent reaction.</text>
</comment>
<comment type="catalytic activity">
    <reaction evidence="1">
        <text>5-amino-1-(5-phospho-beta-D-ribosyl)imidazole + S-adenosyl-L-methionine = 4-amino-2-methyl-5-(phosphooxymethyl)pyrimidine + CO + 5'-deoxyadenosine + formate + L-methionine + 3 H(+)</text>
        <dbReference type="Rhea" id="RHEA:24840"/>
        <dbReference type="ChEBI" id="CHEBI:15378"/>
        <dbReference type="ChEBI" id="CHEBI:15740"/>
        <dbReference type="ChEBI" id="CHEBI:17245"/>
        <dbReference type="ChEBI" id="CHEBI:17319"/>
        <dbReference type="ChEBI" id="CHEBI:57844"/>
        <dbReference type="ChEBI" id="CHEBI:58354"/>
        <dbReference type="ChEBI" id="CHEBI:59789"/>
        <dbReference type="ChEBI" id="CHEBI:137981"/>
        <dbReference type="EC" id="4.1.99.17"/>
    </reaction>
</comment>
<comment type="cofactor">
    <cofactor evidence="1">
        <name>[4Fe-4S] cluster</name>
        <dbReference type="ChEBI" id="CHEBI:49883"/>
    </cofactor>
    <text evidence="1">Binds 1 [4Fe-4S] cluster per subunit. The cluster is coordinated with 3 cysteines and an exchangeable S-adenosyl-L-methionine.</text>
</comment>
<comment type="pathway">
    <text evidence="1">Cofactor biosynthesis; thiamine diphosphate biosynthesis.</text>
</comment>
<comment type="subunit">
    <text evidence="1">Homodimer.</text>
</comment>
<comment type="similarity">
    <text evidence="1">Belongs to the ThiC family.</text>
</comment>
<feature type="chain" id="PRO_1000093213" description="Phosphomethylpyrimidine synthase">
    <location>
        <begin position="1"/>
        <end position="628"/>
    </location>
</feature>
<feature type="binding site" evidence="1">
    <location>
        <position position="225"/>
    </location>
    <ligand>
        <name>substrate</name>
    </ligand>
</feature>
<feature type="binding site" evidence="1">
    <location>
        <position position="254"/>
    </location>
    <ligand>
        <name>substrate</name>
    </ligand>
</feature>
<feature type="binding site" evidence="1">
    <location>
        <position position="283"/>
    </location>
    <ligand>
        <name>substrate</name>
    </ligand>
</feature>
<feature type="binding site" evidence="1">
    <location>
        <position position="319"/>
    </location>
    <ligand>
        <name>substrate</name>
    </ligand>
</feature>
<feature type="binding site" evidence="1">
    <location>
        <begin position="339"/>
        <end position="341"/>
    </location>
    <ligand>
        <name>substrate</name>
    </ligand>
</feature>
<feature type="binding site" evidence="1">
    <location>
        <begin position="380"/>
        <end position="383"/>
    </location>
    <ligand>
        <name>substrate</name>
    </ligand>
</feature>
<feature type="binding site" evidence="1">
    <location>
        <position position="419"/>
    </location>
    <ligand>
        <name>substrate</name>
    </ligand>
</feature>
<feature type="binding site" evidence="1">
    <location>
        <position position="423"/>
    </location>
    <ligand>
        <name>Zn(2+)</name>
        <dbReference type="ChEBI" id="CHEBI:29105"/>
    </ligand>
</feature>
<feature type="binding site" evidence="1">
    <location>
        <position position="446"/>
    </location>
    <ligand>
        <name>substrate</name>
    </ligand>
</feature>
<feature type="binding site" evidence="1">
    <location>
        <position position="487"/>
    </location>
    <ligand>
        <name>Zn(2+)</name>
        <dbReference type="ChEBI" id="CHEBI:29105"/>
    </ligand>
</feature>
<feature type="binding site" evidence="1">
    <location>
        <position position="567"/>
    </location>
    <ligand>
        <name>[4Fe-4S] cluster</name>
        <dbReference type="ChEBI" id="CHEBI:49883"/>
        <note>4Fe-4S-S-AdoMet</note>
    </ligand>
</feature>
<feature type="binding site" evidence="1">
    <location>
        <position position="570"/>
    </location>
    <ligand>
        <name>[4Fe-4S] cluster</name>
        <dbReference type="ChEBI" id="CHEBI:49883"/>
        <note>4Fe-4S-S-AdoMet</note>
    </ligand>
</feature>
<feature type="binding site" evidence="1">
    <location>
        <position position="575"/>
    </location>
    <ligand>
        <name>[4Fe-4S] cluster</name>
        <dbReference type="ChEBI" id="CHEBI:49883"/>
        <note>4Fe-4S-S-AdoMet</note>
    </ligand>
</feature>
<gene>
    <name evidence="1" type="primary">thiC</name>
    <name type="ordered locus">Lcho_2430</name>
</gene>
<sequence>MNAPDKLQDLLSLTREPFPASRKVYAEGSEGVRVPMREIALTNGERVTVYDTSGPYTDPLATIDAKLGLPSVRTGWIEARGDTETYAGRNRVALDDGGKHEETARIEALRAQAAALQRTPRRAKAGGNVTQMHYARRGIVTPEMEYVAIRENGKREWMREYLGDAEREARLAGNAKGARIPEIYTPEFVRDEVARGRAIIPANINHPEVEPMAIGRNFGVKINANIGNSAVTSSIEEEVEKLVWAIRWGADNVMDLSTGRNIHTTRDWIVRNSPVPIGTVPIYQALEKVGGIAEDLTWAIYRDTLIEQAEQGVDYFTIHAGVRLPFIHLTANRRTGIVSRGGSILAKWCITHHKENFLYTHFEEICEIMKAYDVSFSLGDGLRPGSASDANDAAQFAELKTLGELTQVAWKHDVQTMIEGPGHVPMHLIQANMDEQIKHCHEAPFYTLGPLTIDIAPGYDHIASAIGAAMIGWMGTAMLCYVTPKEHLGLPDRDDVKQGIIAYKIAAHAADIAKGHPGARARDDAMSKARFEFRWHDQFNLGLDPDTARDYHDETLPKDSSKEAHFCSMCGPKFCSMKITQDVRDYAAAKGLSEEQALADVEQGMAAKSAEFKAQGGELYIPITPVQA</sequence>
<evidence type="ECO:0000255" key="1">
    <source>
        <dbReference type="HAMAP-Rule" id="MF_00089"/>
    </source>
</evidence>
<name>THIC_LEPCP</name>
<protein>
    <recommendedName>
        <fullName evidence="1">Phosphomethylpyrimidine synthase</fullName>
        <ecNumber evidence="1">4.1.99.17</ecNumber>
    </recommendedName>
    <alternativeName>
        <fullName evidence="1">Hydroxymethylpyrimidine phosphate synthase</fullName>
        <shortName evidence="1">HMP-P synthase</shortName>
        <shortName evidence="1">HMP-phosphate synthase</shortName>
        <shortName evidence="1">HMPP synthase</shortName>
    </alternativeName>
    <alternativeName>
        <fullName evidence="1">Thiamine biosynthesis protein ThiC</fullName>
    </alternativeName>
</protein>
<accession>B1Y5I3</accession>
<dbReference type="EC" id="4.1.99.17" evidence="1"/>
<dbReference type="EMBL" id="CP001013">
    <property type="protein sequence ID" value="ACB34695.1"/>
    <property type="molecule type" value="Genomic_DNA"/>
</dbReference>
<dbReference type="RefSeq" id="WP_012347451.1">
    <property type="nucleotide sequence ID" value="NC_010524.1"/>
</dbReference>
<dbReference type="SMR" id="B1Y5I3"/>
<dbReference type="STRING" id="395495.Lcho_2430"/>
<dbReference type="KEGG" id="lch:Lcho_2430"/>
<dbReference type="eggNOG" id="COG0422">
    <property type="taxonomic scope" value="Bacteria"/>
</dbReference>
<dbReference type="HOGENOM" id="CLU_013181_2_1_4"/>
<dbReference type="OrthoDB" id="9805897at2"/>
<dbReference type="UniPathway" id="UPA00060"/>
<dbReference type="Proteomes" id="UP000001693">
    <property type="component" value="Chromosome"/>
</dbReference>
<dbReference type="GO" id="GO:0005829">
    <property type="term" value="C:cytosol"/>
    <property type="evidence" value="ECO:0007669"/>
    <property type="project" value="TreeGrafter"/>
</dbReference>
<dbReference type="GO" id="GO:0051539">
    <property type="term" value="F:4 iron, 4 sulfur cluster binding"/>
    <property type="evidence" value="ECO:0007669"/>
    <property type="project" value="UniProtKB-KW"/>
</dbReference>
<dbReference type="GO" id="GO:0016830">
    <property type="term" value="F:carbon-carbon lyase activity"/>
    <property type="evidence" value="ECO:0007669"/>
    <property type="project" value="InterPro"/>
</dbReference>
<dbReference type="GO" id="GO:0008270">
    <property type="term" value="F:zinc ion binding"/>
    <property type="evidence" value="ECO:0007669"/>
    <property type="project" value="UniProtKB-UniRule"/>
</dbReference>
<dbReference type="GO" id="GO:0009228">
    <property type="term" value="P:thiamine biosynthetic process"/>
    <property type="evidence" value="ECO:0007669"/>
    <property type="project" value="UniProtKB-KW"/>
</dbReference>
<dbReference type="GO" id="GO:0009229">
    <property type="term" value="P:thiamine diphosphate biosynthetic process"/>
    <property type="evidence" value="ECO:0007669"/>
    <property type="project" value="UniProtKB-UniRule"/>
</dbReference>
<dbReference type="FunFam" id="3.20.20.540:FF:000001">
    <property type="entry name" value="Phosphomethylpyrimidine synthase"/>
    <property type="match status" value="1"/>
</dbReference>
<dbReference type="Gene3D" id="6.10.250.620">
    <property type="match status" value="1"/>
</dbReference>
<dbReference type="Gene3D" id="3.20.20.540">
    <property type="entry name" value="Radical SAM ThiC family, central domain"/>
    <property type="match status" value="1"/>
</dbReference>
<dbReference type="HAMAP" id="MF_00089">
    <property type="entry name" value="ThiC"/>
    <property type="match status" value="1"/>
</dbReference>
<dbReference type="InterPro" id="IPR037509">
    <property type="entry name" value="ThiC"/>
</dbReference>
<dbReference type="InterPro" id="IPR025747">
    <property type="entry name" value="ThiC-associated_dom"/>
</dbReference>
<dbReference type="InterPro" id="IPR038521">
    <property type="entry name" value="ThiC/Bza_core_dom"/>
</dbReference>
<dbReference type="InterPro" id="IPR002817">
    <property type="entry name" value="ThiC/BzaA/B"/>
</dbReference>
<dbReference type="NCBIfam" id="NF006763">
    <property type="entry name" value="PRK09284.1"/>
    <property type="match status" value="1"/>
</dbReference>
<dbReference type="NCBIfam" id="NF009895">
    <property type="entry name" value="PRK13352.1"/>
    <property type="match status" value="1"/>
</dbReference>
<dbReference type="NCBIfam" id="TIGR00190">
    <property type="entry name" value="thiC"/>
    <property type="match status" value="1"/>
</dbReference>
<dbReference type="PANTHER" id="PTHR30557:SF1">
    <property type="entry name" value="PHOSPHOMETHYLPYRIMIDINE SYNTHASE, CHLOROPLASTIC"/>
    <property type="match status" value="1"/>
</dbReference>
<dbReference type="PANTHER" id="PTHR30557">
    <property type="entry name" value="THIAMINE BIOSYNTHESIS PROTEIN THIC"/>
    <property type="match status" value="1"/>
</dbReference>
<dbReference type="Pfam" id="PF13667">
    <property type="entry name" value="ThiC-associated"/>
    <property type="match status" value="1"/>
</dbReference>
<dbReference type="Pfam" id="PF01964">
    <property type="entry name" value="ThiC_Rad_SAM"/>
    <property type="match status" value="1"/>
</dbReference>
<dbReference type="SFLD" id="SFLDF00407">
    <property type="entry name" value="phosphomethylpyrimidine_syntha"/>
    <property type="match status" value="1"/>
</dbReference>
<dbReference type="SFLD" id="SFLDG01114">
    <property type="entry name" value="phosphomethylpyrimidine_syntha"/>
    <property type="match status" value="1"/>
</dbReference>
<dbReference type="SFLD" id="SFLDS00113">
    <property type="entry name" value="Radical_SAM_Phosphomethylpyrim"/>
    <property type="match status" value="1"/>
</dbReference>
<proteinExistence type="inferred from homology"/>
<organism>
    <name type="scientific">Leptothrix cholodnii (strain ATCC 51168 / LMG 8142 / SP-6)</name>
    <name type="common">Leptothrix discophora (strain SP-6)</name>
    <dbReference type="NCBI Taxonomy" id="395495"/>
    <lineage>
        <taxon>Bacteria</taxon>
        <taxon>Pseudomonadati</taxon>
        <taxon>Pseudomonadota</taxon>
        <taxon>Betaproteobacteria</taxon>
        <taxon>Burkholderiales</taxon>
        <taxon>Sphaerotilaceae</taxon>
        <taxon>Leptothrix</taxon>
    </lineage>
</organism>
<keyword id="KW-0004">4Fe-4S</keyword>
<keyword id="KW-0408">Iron</keyword>
<keyword id="KW-0411">Iron-sulfur</keyword>
<keyword id="KW-0456">Lyase</keyword>
<keyword id="KW-0479">Metal-binding</keyword>
<keyword id="KW-1185">Reference proteome</keyword>
<keyword id="KW-0949">S-adenosyl-L-methionine</keyword>
<keyword id="KW-0784">Thiamine biosynthesis</keyword>
<keyword id="KW-0862">Zinc</keyword>